<protein>
    <recommendedName>
        <fullName>NADH dehydrogenase [ubiquinone] 1 beta subcomplex subunit 11, mitochondrial</fullName>
    </recommendedName>
    <alternativeName>
        <fullName>Complex I-ESSS</fullName>
        <shortName>CI-ESSS</shortName>
    </alternativeName>
    <alternativeName>
        <fullName>NADH-ubiquinone oxidoreductase ESSS subunit</fullName>
    </alternativeName>
</protein>
<name>NDUBB_CRIGR</name>
<dbReference type="EMBL" id="AY649405">
    <property type="protein sequence ID" value="AAT69237.1"/>
    <property type="molecule type" value="mRNA"/>
</dbReference>
<dbReference type="RefSeq" id="NP_001233718.1">
    <property type="nucleotide sequence ID" value="NM_001246789.1"/>
</dbReference>
<dbReference type="SMR" id="Q6DQX6"/>
<dbReference type="PaxDb" id="10029-NP_001233718.1"/>
<dbReference type="Ensembl" id="ENSCGRT00001009851.1">
    <property type="protein sequence ID" value="ENSCGRP00001006288.1"/>
    <property type="gene ID" value="ENSCGRG00001008464.1"/>
</dbReference>
<dbReference type="GeneID" id="100689361"/>
<dbReference type="KEGG" id="cge:100689361"/>
<dbReference type="CTD" id="54539"/>
<dbReference type="eggNOG" id="KOG4808">
    <property type="taxonomic scope" value="Eukaryota"/>
</dbReference>
<dbReference type="GeneTree" id="ENSGT00390000003022"/>
<dbReference type="OMA" id="DYRMKEW"/>
<dbReference type="OrthoDB" id="5917019at2759"/>
<dbReference type="Proteomes" id="UP000694386">
    <property type="component" value="Unplaced"/>
</dbReference>
<dbReference type="Proteomes" id="UP001108280">
    <property type="component" value="Chromosome X"/>
</dbReference>
<dbReference type="GO" id="GO:0005743">
    <property type="term" value="C:mitochondrial inner membrane"/>
    <property type="evidence" value="ECO:0007669"/>
    <property type="project" value="UniProtKB-SubCell"/>
</dbReference>
<dbReference type="GO" id="GO:0045271">
    <property type="term" value="C:respiratory chain complex I"/>
    <property type="evidence" value="ECO:0000250"/>
    <property type="project" value="UniProtKB"/>
</dbReference>
<dbReference type="InterPro" id="IPR019329">
    <property type="entry name" value="NADH_UbQ_OxRdtase_ESSS_su"/>
</dbReference>
<dbReference type="PANTHER" id="PTHR13327:SF0">
    <property type="entry name" value="NADH DEHYDROGENASE [UBIQUINONE] 1 BETA SUBCOMPLEX SUBUNIT 11, MITOCHONDRIAL"/>
    <property type="match status" value="1"/>
</dbReference>
<dbReference type="PANTHER" id="PTHR13327">
    <property type="entry name" value="NADH-UBIQUINONE OXIDOREDUCTASE ESSS SUBUNIT, MITOCHONDRIAL PRECURSOR"/>
    <property type="match status" value="1"/>
</dbReference>
<dbReference type="Pfam" id="PF10183">
    <property type="entry name" value="ESSS"/>
    <property type="match status" value="1"/>
</dbReference>
<organism>
    <name type="scientific">Cricetulus griseus</name>
    <name type="common">Chinese hamster</name>
    <name type="synonym">Cricetulus barabensis griseus</name>
    <dbReference type="NCBI Taxonomy" id="10029"/>
    <lineage>
        <taxon>Eukaryota</taxon>
        <taxon>Metazoa</taxon>
        <taxon>Chordata</taxon>
        <taxon>Craniata</taxon>
        <taxon>Vertebrata</taxon>
        <taxon>Euteleostomi</taxon>
        <taxon>Mammalia</taxon>
        <taxon>Eutheria</taxon>
        <taxon>Euarchontoglires</taxon>
        <taxon>Glires</taxon>
        <taxon>Rodentia</taxon>
        <taxon>Myomorpha</taxon>
        <taxon>Muroidea</taxon>
        <taxon>Cricetidae</taxon>
        <taxon>Cricetinae</taxon>
        <taxon>Cricetulus</taxon>
    </lineage>
</organism>
<evidence type="ECO:0000250" key="1"/>
<evidence type="ECO:0000250" key="2">
    <source>
        <dbReference type="UniProtKB" id="Q9NX14"/>
    </source>
</evidence>
<evidence type="ECO:0000255" key="3"/>
<evidence type="ECO:0000256" key="4">
    <source>
        <dbReference type="SAM" id="MobiDB-lite"/>
    </source>
</evidence>
<evidence type="ECO:0000305" key="5"/>
<gene>
    <name type="primary">NDUFB11</name>
</gene>
<accession>Q6DQX6</accession>
<comment type="function">
    <text evidence="2">Accessory subunit of the mitochondrial membrane respiratory chain NADH dehydrogenase (Complex I), that is believed not to be involved in catalysis. Complex I functions in the transfer of electrons from NADH to the respiratory chain. The immediate electron acceptor for the enzyme is believed to be ubiquinone.</text>
</comment>
<comment type="subunit">
    <text evidence="2">Complex I is composed of 45 different subunits. Interacts with BCAP31.</text>
</comment>
<comment type="subcellular location">
    <subcellularLocation>
        <location evidence="2">Mitochondrion inner membrane</location>
        <topology evidence="2">Single-pass membrane protein</topology>
    </subcellularLocation>
    <text evidence="2">The interaction with BCAP31 mediates mitochondria localization.</text>
</comment>
<comment type="similarity">
    <text evidence="5">Belongs to the complex I NDUFB11 subunit family.</text>
</comment>
<reference key="1">
    <citation type="journal article" date="2004" name="Eur. J. Biochem.">
        <title>The role of the ESSS protein in the assembly of a functional and stable mammalian mitochondrial complex I (NADH-ubiquinone oxidoreductase).</title>
        <authorList>
            <person name="Potluri P."/>
            <person name="Yadava N."/>
            <person name="Scheffler I.E."/>
        </authorList>
    </citation>
    <scope>NUCLEOTIDE SEQUENCE [MRNA]</scope>
</reference>
<sequence>MAARLLSLCARRLSVTAAVRGLPAAGVRWESSRAVISPSTVERKRQRQPTMHWQEDPESEDENVYAKNPDFHGYDQDPVVDVWNMRVVFFFGFSIVLVLGTTFMAYLPDYRMQEWARREAERLVKYREANGLPIMESNCFDPSKIQLPEDE</sequence>
<keyword id="KW-0249">Electron transport</keyword>
<keyword id="KW-0472">Membrane</keyword>
<keyword id="KW-0496">Mitochondrion</keyword>
<keyword id="KW-0999">Mitochondrion inner membrane</keyword>
<keyword id="KW-0679">Respiratory chain</keyword>
<keyword id="KW-0809">Transit peptide</keyword>
<keyword id="KW-0812">Transmembrane</keyword>
<keyword id="KW-1133">Transmembrane helix</keyword>
<keyword id="KW-0813">Transport</keyword>
<feature type="transit peptide" description="Mitochondrion" evidence="1">
    <location>
        <begin position="1"/>
        <end position="29"/>
    </location>
</feature>
<feature type="chain" id="PRO_0000234303" description="NADH dehydrogenase [ubiquinone] 1 beta subcomplex subunit 11, mitochondrial">
    <location>
        <begin position="30"/>
        <end position="151"/>
    </location>
</feature>
<feature type="transmembrane region" description="Helical" evidence="3">
    <location>
        <begin position="87"/>
        <end position="107"/>
    </location>
</feature>
<feature type="region of interest" description="Disordered" evidence="4">
    <location>
        <begin position="39"/>
        <end position="62"/>
    </location>
</feature>
<proteinExistence type="evidence at transcript level"/>